<dbReference type="EC" id="1.2.1.70" evidence="1"/>
<dbReference type="EMBL" id="AE017194">
    <property type="protein sequence ID" value="AAS43458.1"/>
    <property type="molecule type" value="Genomic_DNA"/>
</dbReference>
<dbReference type="SMR" id="Q72ZW0"/>
<dbReference type="KEGG" id="bca:BCE_4557"/>
<dbReference type="HOGENOM" id="CLU_035113_2_2_9"/>
<dbReference type="UniPathway" id="UPA00251">
    <property type="reaction ID" value="UER00316"/>
</dbReference>
<dbReference type="Proteomes" id="UP000002527">
    <property type="component" value="Chromosome"/>
</dbReference>
<dbReference type="GO" id="GO:0008883">
    <property type="term" value="F:glutamyl-tRNA reductase activity"/>
    <property type="evidence" value="ECO:0007669"/>
    <property type="project" value="UniProtKB-UniRule"/>
</dbReference>
<dbReference type="GO" id="GO:0050661">
    <property type="term" value="F:NADP binding"/>
    <property type="evidence" value="ECO:0007669"/>
    <property type="project" value="InterPro"/>
</dbReference>
<dbReference type="GO" id="GO:0006782">
    <property type="term" value="P:protoporphyrinogen IX biosynthetic process"/>
    <property type="evidence" value="ECO:0007669"/>
    <property type="project" value="UniProtKB-UniRule"/>
</dbReference>
<dbReference type="CDD" id="cd05213">
    <property type="entry name" value="NAD_bind_Glutamyl_tRNA_reduct"/>
    <property type="match status" value="1"/>
</dbReference>
<dbReference type="FunFam" id="3.30.460.30:FF:000001">
    <property type="entry name" value="Glutamyl-tRNA reductase"/>
    <property type="match status" value="1"/>
</dbReference>
<dbReference type="FunFam" id="3.40.50.720:FF:000031">
    <property type="entry name" value="Glutamyl-tRNA reductase"/>
    <property type="match status" value="1"/>
</dbReference>
<dbReference type="Gene3D" id="3.30.460.30">
    <property type="entry name" value="Glutamyl-tRNA reductase, N-terminal domain"/>
    <property type="match status" value="1"/>
</dbReference>
<dbReference type="Gene3D" id="3.40.50.720">
    <property type="entry name" value="NAD(P)-binding Rossmann-like Domain"/>
    <property type="match status" value="1"/>
</dbReference>
<dbReference type="HAMAP" id="MF_00087">
    <property type="entry name" value="Glu_tRNA_reductase"/>
    <property type="match status" value="1"/>
</dbReference>
<dbReference type="InterPro" id="IPR000343">
    <property type="entry name" value="4pyrrol_synth_GluRdtase"/>
</dbReference>
<dbReference type="InterPro" id="IPR015896">
    <property type="entry name" value="4pyrrol_synth_GluRdtase_dimer"/>
</dbReference>
<dbReference type="InterPro" id="IPR015895">
    <property type="entry name" value="4pyrrol_synth_GluRdtase_N"/>
</dbReference>
<dbReference type="InterPro" id="IPR018214">
    <property type="entry name" value="GluRdtase_CS"/>
</dbReference>
<dbReference type="InterPro" id="IPR036453">
    <property type="entry name" value="GluRdtase_dimer_dom_sf"/>
</dbReference>
<dbReference type="InterPro" id="IPR036343">
    <property type="entry name" value="GluRdtase_N_sf"/>
</dbReference>
<dbReference type="InterPro" id="IPR036291">
    <property type="entry name" value="NAD(P)-bd_dom_sf"/>
</dbReference>
<dbReference type="InterPro" id="IPR006151">
    <property type="entry name" value="Shikm_DH/Glu-tRNA_Rdtase"/>
</dbReference>
<dbReference type="NCBIfam" id="TIGR01035">
    <property type="entry name" value="hemA"/>
    <property type="match status" value="1"/>
</dbReference>
<dbReference type="PANTHER" id="PTHR43120">
    <property type="entry name" value="GLUTAMYL-TRNA REDUCTASE 1, CHLOROPLASTIC"/>
    <property type="match status" value="1"/>
</dbReference>
<dbReference type="PANTHER" id="PTHR43120:SF1">
    <property type="entry name" value="GLUTAMYL-TRNA REDUCTASE 1, CHLOROPLASTIC"/>
    <property type="match status" value="1"/>
</dbReference>
<dbReference type="Pfam" id="PF00745">
    <property type="entry name" value="GlutR_dimer"/>
    <property type="match status" value="1"/>
</dbReference>
<dbReference type="Pfam" id="PF05201">
    <property type="entry name" value="GlutR_N"/>
    <property type="match status" value="1"/>
</dbReference>
<dbReference type="Pfam" id="PF01488">
    <property type="entry name" value="Shikimate_DH"/>
    <property type="match status" value="1"/>
</dbReference>
<dbReference type="PIRSF" id="PIRSF000445">
    <property type="entry name" value="4pyrrol_synth_GluRdtase"/>
    <property type="match status" value="1"/>
</dbReference>
<dbReference type="SUPFAM" id="SSF69742">
    <property type="entry name" value="Glutamyl tRNA-reductase catalytic, N-terminal domain"/>
    <property type="match status" value="1"/>
</dbReference>
<dbReference type="SUPFAM" id="SSF69075">
    <property type="entry name" value="Glutamyl tRNA-reductase dimerization domain"/>
    <property type="match status" value="1"/>
</dbReference>
<dbReference type="SUPFAM" id="SSF51735">
    <property type="entry name" value="NAD(P)-binding Rossmann-fold domains"/>
    <property type="match status" value="1"/>
</dbReference>
<dbReference type="PROSITE" id="PS00747">
    <property type="entry name" value="GLUTR"/>
    <property type="match status" value="1"/>
</dbReference>
<feature type="chain" id="PRO_0000113989" description="Glutamyl-tRNA reductase">
    <location>
        <begin position="1"/>
        <end position="444"/>
    </location>
</feature>
<feature type="active site" description="Nucleophile" evidence="1">
    <location>
        <position position="50"/>
    </location>
</feature>
<feature type="binding site" evidence="1">
    <location>
        <begin position="49"/>
        <end position="52"/>
    </location>
    <ligand>
        <name>substrate</name>
    </ligand>
</feature>
<feature type="binding site" evidence="1">
    <location>
        <position position="109"/>
    </location>
    <ligand>
        <name>substrate</name>
    </ligand>
</feature>
<feature type="binding site" evidence="1">
    <location>
        <begin position="114"/>
        <end position="116"/>
    </location>
    <ligand>
        <name>substrate</name>
    </ligand>
</feature>
<feature type="binding site" evidence="1">
    <location>
        <position position="120"/>
    </location>
    <ligand>
        <name>substrate</name>
    </ligand>
</feature>
<feature type="binding site" evidence="1">
    <location>
        <begin position="189"/>
        <end position="194"/>
    </location>
    <ligand>
        <name>NADP(+)</name>
        <dbReference type="ChEBI" id="CHEBI:58349"/>
    </ligand>
</feature>
<feature type="site" description="Important for activity" evidence="1">
    <location>
        <position position="99"/>
    </location>
</feature>
<protein>
    <recommendedName>
        <fullName evidence="1">Glutamyl-tRNA reductase</fullName>
        <shortName evidence="1">GluTR</shortName>
        <ecNumber evidence="1">1.2.1.70</ecNumber>
    </recommendedName>
</protein>
<accession>Q72ZW0</accession>
<evidence type="ECO:0000255" key="1">
    <source>
        <dbReference type="HAMAP-Rule" id="MF_00087"/>
    </source>
</evidence>
<proteinExistence type="inferred from homology"/>
<keyword id="KW-0521">NADP</keyword>
<keyword id="KW-0560">Oxidoreductase</keyword>
<keyword id="KW-0627">Porphyrin biosynthesis</keyword>
<name>HEM1_BACC1</name>
<comment type="function">
    <text evidence="1">Catalyzes the NADPH-dependent reduction of glutamyl-tRNA(Glu) to glutamate 1-semialdehyde (GSA).</text>
</comment>
<comment type="catalytic activity">
    <reaction evidence="1">
        <text>(S)-4-amino-5-oxopentanoate + tRNA(Glu) + NADP(+) = L-glutamyl-tRNA(Glu) + NADPH + H(+)</text>
        <dbReference type="Rhea" id="RHEA:12344"/>
        <dbReference type="Rhea" id="RHEA-COMP:9663"/>
        <dbReference type="Rhea" id="RHEA-COMP:9680"/>
        <dbReference type="ChEBI" id="CHEBI:15378"/>
        <dbReference type="ChEBI" id="CHEBI:57501"/>
        <dbReference type="ChEBI" id="CHEBI:57783"/>
        <dbReference type="ChEBI" id="CHEBI:58349"/>
        <dbReference type="ChEBI" id="CHEBI:78442"/>
        <dbReference type="ChEBI" id="CHEBI:78520"/>
        <dbReference type="EC" id="1.2.1.70"/>
    </reaction>
</comment>
<comment type="pathway">
    <text evidence="1">Porphyrin-containing compound metabolism; protoporphyrin-IX biosynthesis; 5-aminolevulinate from L-glutamyl-tRNA(Glu): step 1/2.</text>
</comment>
<comment type="subunit">
    <text evidence="1">Homodimer.</text>
</comment>
<comment type="domain">
    <text evidence="1">Possesses an unusual extended V-shaped dimeric structure with each monomer consisting of three distinct domains arranged along a curved 'spinal' alpha-helix. The N-terminal catalytic domain specifically recognizes the glutamate moiety of the substrate. The second domain is the NADPH-binding domain, and the third C-terminal domain is responsible for dimerization.</text>
</comment>
<comment type="miscellaneous">
    <text evidence="1">During catalysis, the active site Cys acts as a nucleophile attacking the alpha-carbonyl group of tRNA-bound glutamate with the formation of a thioester intermediate between enzyme and glutamate, and the concomitant release of tRNA(Glu). The thioester intermediate is finally reduced by direct hydride transfer from NADPH, to form the product GSA.</text>
</comment>
<comment type="similarity">
    <text evidence="1">Belongs to the glutamyl-tRNA reductase family.</text>
</comment>
<sequence length="444" mass="49800">MHILVVSVNYRTAPVEFREKLTFQATELEQAMTTLQKQKSVLENVIVSTCNRTEIYAVVDQLHTGRYYIKKFLADWFQLEIEEVAPYLTIFEQDGAIDHLFRVTCGLDSMVVGETQILGQIKDSFLEAQQVKATGTIFNELFKQVITLAKRAHSETTIGESAMSVSYAAVELGKKIFGELTDCHVLILGAGKMGELALQNLYGSGARKVTVMNRTLSKAEIMAEKYMGHAKPLSELQCALLEADILISSTGASDYVITKEMMTKVEKMRSGRPLFMVDIAVPRDIDPAIDELEGSFLYDIDDLQGVVEANRAERLKEAEKIQFMIEEEIVLFKTWLSTLGVVPLISALRDKALAIQSETMESLERKIPTLSDRERKVISKHTKSIINQLLKDPILVAKEIAAEEGADEKLALFAKIFDLEMEDVESRAEEVEHKRAWTPSVPSL</sequence>
<organism>
    <name type="scientific">Bacillus cereus (strain ATCC 10987 / NRS 248)</name>
    <dbReference type="NCBI Taxonomy" id="222523"/>
    <lineage>
        <taxon>Bacteria</taxon>
        <taxon>Bacillati</taxon>
        <taxon>Bacillota</taxon>
        <taxon>Bacilli</taxon>
        <taxon>Bacillales</taxon>
        <taxon>Bacillaceae</taxon>
        <taxon>Bacillus</taxon>
        <taxon>Bacillus cereus group</taxon>
    </lineage>
</organism>
<reference key="1">
    <citation type="journal article" date="2004" name="Nucleic Acids Res.">
        <title>The genome sequence of Bacillus cereus ATCC 10987 reveals metabolic adaptations and a large plasmid related to Bacillus anthracis pXO1.</title>
        <authorList>
            <person name="Rasko D.A."/>
            <person name="Ravel J."/>
            <person name="Oekstad O.A."/>
            <person name="Helgason E."/>
            <person name="Cer R.Z."/>
            <person name="Jiang L."/>
            <person name="Shores K.A."/>
            <person name="Fouts D.E."/>
            <person name="Tourasse N.J."/>
            <person name="Angiuoli S.V."/>
            <person name="Kolonay J.F."/>
            <person name="Nelson W.C."/>
            <person name="Kolstoe A.-B."/>
            <person name="Fraser C.M."/>
            <person name="Read T.D."/>
        </authorList>
    </citation>
    <scope>NUCLEOTIDE SEQUENCE [LARGE SCALE GENOMIC DNA]</scope>
    <source>
        <strain>ATCC 10987 / NRS 248</strain>
    </source>
</reference>
<gene>
    <name evidence="1" type="primary">hemA</name>
    <name type="ordered locus">BCE_4557</name>
</gene>